<dbReference type="EMBL" id="AC009326">
    <property type="protein sequence ID" value="AAD56335.1"/>
    <property type="molecule type" value="Genomic_DNA"/>
</dbReference>
<dbReference type="EMBL" id="AC011436">
    <property type="protein sequence ID" value="AAF14020.1"/>
    <property type="molecule type" value="Genomic_DNA"/>
</dbReference>
<dbReference type="EMBL" id="CP002686">
    <property type="protein sequence ID" value="AEE74736.1"/>
    <property type="molecule type" value="Genomic_DNA"/>
</dbReference>
<dbReference type="EMBL" id="AF370225">
    <property type="protein sequence ID" value="AAK44040.1"/>
    <property type="molecule type" value="mRNA"/>
</dbReference>
<dbReference type="EMBL" id="AY059117">
    <property type="protein sequence ID" value="AAL15223.1"/>
    <property type="molecule type" value="mRNA"/>
</dbReference>
<dbReference type="EMBL" id="AY086582">
    <property type="protein sequence ID" value="AAM63644.1"/>
    <property type="molecule type" value="mRNA"/>
</dbReference>
<dbReference type="EMBL" id="Z26534">
    <property type="protein sequence ID" value="CAA81305.1"/>
    <property type="molecule type" value="mRNA"/>
</dbReference>
<dbReference type="RefSeq" id="NP_187531.1">
    <molecule id="Q42112-1"/>
    <property type="nucleotide sequence ID" value="NM_111754.4"/>
</dbReference>
<dbReference type="SMR" id="Q42112"/>
<dbReference type="BioGRID" id="5410">
    <property type="interactions" value="132"/>
</dbReference>
<dbReference type="FunCoup" id="Q42112">
    <property type="interactions" value="3344"/>
</dbReference>
<dbReference type="STRING" id="3702.Q42112"/>
<dbReference type="iPTMnet" id="Q42112"/>
<dbReference type="PaxDb" id="3702-AT3G09200.1"/>
<dbReference type="EnsemblPlants" id="AT3G09200.1">
    <molecule id="Q42112-1"/>
    <property type="protein sequence ID" value="AT3G09200.1"/>
    <property type="gene ID" value="AT3G09200"/>
</dbReference>
<dbReference type="GeneID" id="820076"/>
<dbReference type="Gramene" id="AT3G09200.1">
    <molecule id="Q42112-1"/>
    <property type="protein sequence ID" value="AT3G09200.1"/>
    <property type="gene ID" value="AT3G09200"/>
</dbReference>
<dbReference type="KEGG" id="ath:AT3G09200"/>
<dbReference type="Araport" id="AT3G09200"/>
<dbReference type="TAIR" id="AT3G09200"/>
<dbReference type="eggNOG" id="KOG0815">
    <property type="taxonomic scope" value="Eukaryota"/>
</dbReference>
<dbReference type="HOGENOM" id="CLU_053173_1_1_1"/>
<dbReference type="InParanoid" id="Q42112"/>
<dbReference type="OMA" id="DMNPFKL"/>
<dbReference type="OrthoDB" id="1087930at2759"/>
<dbReference type="PhylomeDB" id="Q42112"/>
<dbReference type="CD-CODE" id="4299E36E">
    <property type="entry name" value="Nucleolus"/>
</dbReference>
<dbReference type="PRO" id="PR:Q42112"/>
<dbReference type="Proteomes" id="UP000006548">
    <property type="component" value="Chromosome 3"/>
</dbReference>
<dbReference type="ExpressionAtlas" id="Q42112">
    <property type="expression patterns" value="baseline and differential"/>
</dbReference>
<dbReference type="GO" id="GO:0005829">
    <property type="term" value="C:cytosol"/>
    <property type="evidence" value="ECO:0007005"/>
    <property type="project" value="TAIR"/>
</dbReference>
<dbReference type="GO" id="GO:0022626">
    <property type="term" value="C:cytosolic ribosome"/>
    <property type="evidence" value="ECO:0007005"/>
    <property type="project" value="TAIR"/>
</dbReference>
<dbReference type="GO" id="GO:0005730">
    <property type="term" value="C:nucleolus"/>
    <property type="evidence" value="ECO:0007005"/>
    <property type="project" value="TAIR"/>
</dbReference>
<dbReference type="GO" id="GO:0005634">
    <property type="term" value="C:nucleus"/>
    <property type="evidence" value="ECO:0007005"/>
    <property type="project" value="TAIR"/>
</dbReference>
<dbReference type="GO" id="GO:0009506">
    <property type="term" value="C:plasmodesma"/>
    <property type="evidence" value="ECO:0007005"/>
    <property type="project" value="TAIR"/>
</dbReference>
<dbReference type="GO" id="GO:1990904">
    <property type="term" value="C:ribonucleoprotein complex"/>
    <property type="evidence" value="ECO:0007669"/>
    <property type="project" value="UniProtKB-KW"/>
</dbReference>
<dbReference type="GO" id="GO:0005507">
    <property type="term" value="F:copper ion binding"/>
    <property type="evidence" value="ECO:0007005"/>
    <property type="project" value="TAIR"/>
</dbReference>
<dbReference type="GO" id="GO:0003729">
    <property type="term" value="F:mRNA binding"/>
    <property type="evidence" value="ECO:0000314"/>
    <property type="project" value="TAIR"/>
</dbReference>
<dbReference type="GO" id="GO:0003735">
    <property type="term" value="F:structural constituent of ribosome"/>
    <property type="evidence" value="ECO:0000314"/>
    <property type="project" value="CAFA"/>
</dbReference>
<dbReference type="GO" id="GO:0046686">
    <property type="term" value="P:response to cadmium ion"/>
    <property type="evidence" value="ECO:0000270"/>
    <property type="project" value="TAIR"/>
</dbReference>
<dbReference type="GO" id="GO:0010043">
    <property type="term" value="P:response to zinc ion"/>
    <property type="evidence" value="ECO:0000270"/>
    <property type="project" value="TAIR"/>
</dbReference>
<dbReference type="GO" id="GO:0042254">
    <property type="term" value="P:ribosome biogenesis"/>
    <property type="evidence" value="ECO:0007669"/>
    <property type="project" value="InterPro"/>
</dbReference>
<dbReference type="CDD" id="cd05795">
    <property type="entry name" value="Ribosomal_P0_L10e"/>
    <property type="match status" value="1"/>
</dbReference>
<dbReference type="FunFam" id="3.90.105.20:FF:000001">
    <property type="entry name" value="60S acidic ribosomal protein P0"/>
    <property type="match status" value="1"/>
</dbReference>
<dbReference type="Gene3D" id="3.30.70.1730">
    <property type="match status" value="1"/>
</dbReference>
<dbReference type="Gene3D" id="3.90.105.20">
    <property type="match status" value="1"/>
</dbReference>
<dbReference type="InterPro" id="IPR050323">
    <property type="entry name" value="Ribosomal_protein_uL10"/>
</dbReference>
<dbReference type="InterPro" id="IPR001790">
    <property type="entry name" value="Ribosomal_uL10"/>
</dbReference>
<dbReference type="InterPro" id="IPR040637">
    <property type="entry name" value="Ribosomal_uL10-like_insert"/>
</dbReference>
<dbReference type="InterPro" id="IPR043164">
    <property type="entry name" value="Ribosomal_uL10-like_insert_sf"/>
</dbReference>
<dbReference type="InterPro" id="IPR043141">
    <property type="entry name" value="Ribosomal_uL10-like_sf"/>
</dbReference>
<dbReference type="InterPro" id="IPR030670">
    <property type="entry name" value="uL10_eukaryotes"/>
</dbReference>
<dbReference type="PANTHER" id="PTHR45699">
    <property type="entry name" value="60S ACIDIC RIBOSOMAL PROTEIN P0"/>
    <property type="match status" value="1"/>
</dbReference>
<dbReference type="PANTHER" id="PTHR45699:SF25">
    <property type="entry name" value="LARGE RIBOSOMAL SUBUNIT PROTEIN UL10X-RELATED"/>
    <property type="match status" value="1"/>
</dbReference>
<dbReference type="Pfam" id="PF00428">
    <property type="entry name" value="Ribosomal_60s"/>
    <property type="match status" value="1"/>
</dbReference>
<dbReference type="Pfam" id="PF00466">
    <property type="entry name" value="Ribosomal_L10"/>
    <property type="match status" value="1"/>
</dbReference>
<dbReference type="Pfam" id="PF17777">
    <property type="entry name" value="RL10P_insert"/>
    <property type="match status" value="1"/>
</dbReference>
<dbReference type="PIRSF" id="PIRSF039087">
    <property type="entry name" value="L10E"/>
    <property type="match status" value="1"/>
</dbReference>
<dbReference type="SUPFAM" id="SSF160369">
    <property type="entry name" value="Ribosomal protein L10-like"/>
    <property type="match status" value="1"/>
</dbReference>
<sequence>MVKATKAEKKIAYDTKLCQLIDEYTQILVVAADNVGSTQLQNIRKGLRGDSVVLMGKNTMMKRSVRIHSENTGNTAILNLLPLLQGNVGLIFTKGDLKEVSEEVAKYKVGAPARVGLVAPIDVVVQPGNTGLDPSQTSFFQVLNIPTKINKGTVEIITPVELIKQGDKVGSSEAALLAKLGIRPFSYGLVVQSVYDNGSVFSPEVLDLTEDQLVEKFASGISMVTSLALAVSYPTLAAAPHMFINAYKNALAIAVATEYTFPQAEKVKEYLKDPSKFAVASVAAVSADAGGGAPAAAKVEEKEESDEEDYGGDFGLFDEE</sequence>
<protein>
    <recommendedName>
        <fullName evidence="5">Large ribosomal subunit protein uL10y</fullName>
    </recommendedName>
    <alternativeName>
        <fullName>60S acidic ribosomal protein P0-2</fullName>
    </alternativeName>
</protein>
<reference key="1">
    <citation type="journal article" date="2000" name="Nature">
        <title>Sequence and analysis of chromosome 3 of the plant Arabidopsis thaliana.</title>
        <authorList>
            <person name="Salanoubat M."/>
            <person name="Lemcke K."/>
            <person name="Rieger M."/>
            <person name="Ansorge W."/>
            <person name="Unseld M."/>
            <person name="Fartmann B."/>
            <person name="Valle G."/>
            <person name="Bloecker H."/>
            <person name="Perez-Alonso M."/>
            <person name="Obermaier B."/>
            <person name="Delseny M."/>
            <person name="Boutry M."/>
            <person name="Grivell L.A."/>
            <person name="Mache R."/>
            <person name="Puigdomenech P."/>
            <person name="De Simone V."/>
            <person name="Choisne N."/>
            <person name="Artiguenave F."/>
            <person name="Robert C."/>
            <person name="Brottier P."/>
            <person name="Wincker P."/>
            <person name="Cattolico L."/>
            <person name="Weissenbach J."/>
            <person name="Saurin W."/>
            <person name="Quetier F."/>
            <person name="Schaefer M."/>
            <person name="Mueller-Auer S."/>
            <person name="Gabel C."/>
            <person name="Fuchs M."/>
            <person name="Benes V."/>
            <person name="Wurmbach E."/>
            <person name="Drzonek H."/>
            <person name="Erfle H."/>
            <person name="Jordan N."/>
            <person name="Bangert S."/>
            <person name="Wiedelmann R."/>
            <person name="Kranz H."/>
            <person name="Voss H."/>
            <person name="Holland R."/>
            <person name="Brandt P."/>
            <person name="Nyakatura G."/>
            <person name="Vezzi A."/>
            <person name="D'Angelo M."/>
            <person name="Pallavicini A."/>
            <person name="Toppo S."/>
            <person name="Simionati B."/>
            <person name="Conrad A."/>
            <person name="Hornischer K."/>
            <person name="Kauer G."/>
            <person name="Loehnert T.-H."/>
            <person name="Nordsiek G."/>
            <person name="Reichelt J."/>
            <person name="Scharfe M."/>
            <person name="Schoen O."/>
            <person name="Bargues M."/>
            <person name="Terol J."/>
            <person name="Climent J."/>
            <person name="Navarro P."/>
            <person name="Collado C."/>
            <person name="Perez-Perez A."/>
            <person name="Ottenwaelder B."/>
            <person name="Duchemin D."/>
            <person name="Cooke R."/>
            <person name="Laudie M."/>
            <person name="Berger-Llauro C."/>
            <person name="Purnelle B."/>
            <person name="Masuy D."/>
            <person name="de Haan M."/>
            <person name="Maarse A.C."/>
            <person name="Alcaraz J.-P."/>
            <person name="Cottet A."/>
            <person name="Casacuberta E."/>
            <person name="Monfort A."/>
            <person name="Argiriou A."/>
            <person name="Flores M."/>
            <person name="Liguori R."/>
            <person name="Vitale D."/>
            <person name="Mannhaupt G."/>
            <person name="Haase D."/>
            <person name="Schoof H."/>
            <person name="Rudd S."/>
            <person name="Zaccaria P."/>
            <person name="Mewes H.-W."/>
            <person name="Mayer K.F.X."/>
            <person name="Kaul S."/>
            <person name="Town C.D."/>
            <person name="Koo H.L."/>
            <person name="Tallon L.J."/>
            <person name="Jenkins J."/>
            <person name="Rooney T."/>
            <person name="Rizzo M."/>
            <person name="Walts A."/>
            <person name="Utterback T."/>
            <person name="Fujii C.Y."/>
            <person name="Shea T.P."/>
            <person name="Creasy T.H."/>
            <person name="Haas B."/>
            <person name="Maiti R."/>
            <person name="Wu D."/>
            <person name="Peterson J."/>
            <person name="Van Aken S."/>
            <person name="Pai G."/>
            <person name="Militscher J."/>
            <person name="Sellers P."/>
            <person name="Gill J.E."/>
            <person name="Feldblyum T.V."/>
            <person name="Preuss D."/>
            <person name="Lin X."/>
            <person name="Nierman W.C."/>
            <person name="Salzberg S.L."/>
            <person name="White O."/>
            <person name="Venter J.C."/>
            <person name="Fraser C.M."/>
            <person name="Kaneko T."/>
            <person name="Nakamura Y."/>
            <person name="Sato S."/>
            <person name="Kato T."/>
            <person name="Asamizu E."/>
            <person name="Sasamoto S."/>
            <person name="Kimura T."/>
            <person name="Idesawa K."/>
            <person name="Kawashima K."/>
            <person name="Kishida Y."/>
            <person name="Kiyokawa C."/>
            <person name="Kohara M."/>
            <person name="Matsumoto M."/>
            <person name="Matsuno A."/>
            <person name="Muraki A."/>
            <person name="Nakayama S."/>
            <person name="Nakazaki N."/>
            <person name="Shinpo S."/>
            <person name="Takeuchi C."/>
            <person name="Wada T."/>
            <person name="Watanabe A."/>
            <person name="Yamada M."/>
            <person name="Yasuda M."/>
            <person name="Tabata S."/>
        </authorList>
    </citation>
    <scope>NUCLEOTIDE SEQUENCE [LARGE SCALE GENOMIC DNA]</scope>
    <source>
        <strain>cv. Columbia</strain>
    </source>
</reference>
<reference key="2">
    <citation type="journal article" date="2017" name="Plant J.">
        <title>Araport11: a complete reannotation of the Arabidopsis thaliana reference genome.</title>
        <authorList>
            <person name="Cheng C.Y."/>
            <person name="Krishnakumar V."/>
            <person name="Chan A.P."/>
            <person name="Thibaud-Nissen F."/>
            <person name="Schobel S."/>
            <person name="Town C.D."/>
        </authorList>
    </citation>
    <scope>GENOME REANNOTATION</scope>
    <source>
        <strain>cv. Columbia</strain>
    </source>
</reference>
<reference key="3">
    <citation type="journal article" date="2003" name="Science">
        <title>Empirical analysis of transcriptional activity in the Arabidopsis genome.</title>
        <authorList>
            <person name="Yamada K."/>
            <person name="Lim J."/>
            <person name="Dale J.M."/>
            <person name="Chen H."/>
            <person name="Shinn P."/>
            <person name="Palm C.J."/>
            <person name="Southwick A.M."/>
            <person name="Wu H.C."/>
            <person name="Kim C.J."/>
            <person name="Nguyen M."/>
            <person name="Pham P.K."/>
            <person name="Cheuk R.F."/>
            <person name="Karlin-Newmann G."/>
            <person name="Liu S.X."/>
            <person name="Lam B."/>
            <person name="Sakano H."/>
            <person name="Wu T."/>
            <person name="Yu G."/>
            <person name="Miranda M."/>
            <person name="Quach H.L."/>
            <person name="Tripp M."/>
            <person name="Chang C.H."/>
            <person name="Lee J.M."/>
            <person name="Toriumi M.J."/>
            <person name="Chan M.M."/>
            <person name="Tang C.C."/>
            <person name="Onodera C.S."/>
            <person name="Deng J.M."/>
            <person name="Akiyama K."/>
            <person name="Ansari Y."/>
            <person name="Arakawa T."/>
            <person name="Banh J."/>
            <person name="Banno F."/>
            <person name="Bowser L."/>
            <person name="Brooks S.Y."/>
            <person name="Carninci P."/>
            <person name="Chao Q."/>
            <person name="Choy N."/>
            <person name="Enju A."/>
            <person name="Goldsmith A.D."/>
            <person name="Gurjal M."/>
            <person name="Hansen N.F."/>
            <person name="Hayashizaki Y."/>
            <person name="Johnson-Hopson C."/>
            <person name="Hsuan V.W."/>
            <person name="Iida K."/>
            <person name="Karnes M."/>
            <person name="Khan S."/>
            <person name="Koesema E."/>
            <person name="Ishida J."/>
            <person name="Jiang P.X."/>
            <person name="Jones T."/>
            <person name="Kawai J."/>
            <person name="Kamiya A."/>
            <person name="Meyers C."/>
            <person name="Nakajima M."/>
            <person name="Narusaka M."/>
            <person name="Seki M."/>
            <person name="Sakurai T."/>
            <person name="Satou M."/>
            <person name="Tamse R."/>
            <person name="Vaysberg M."/>
            <person name="Wallender E.K."/>
            <person name="Wong C."/>
            <person name="Yamamura Y."/>
            <person name="Yuan S."/>
            <person name="Shinozaki K."/>
            <person name="Davis R.W."/>
            <person name="Theologis A."/>
            <person name="Ecker J.R."/>
        </authorList>
    </citation>
    <scope>NUCLEOTIDE SEQUENCE [LARGE SCALE MRNA]</scope>
    <source>
        <strain>cv. Columbia</strain>
    </source>
</reference>
<reference key="4">
    <citation type="submission" date="2002-03" db="EMBL/GenBank/DDBJ databases">
        <title>Full-length cDNA from Arabidopsis thaliana.</title>
        <authorList>
            <person name="Brover V.V."/>
            <person name="Troukhan M.E."/>
            <person name="Alexandrov N.A."/>
            <person name="Lu Y.-P."/>
            <person name="Flavell R.B."/>
            <person name="Feldmann K.A."/>
        </authorList>
    </citation>
    <scope>NUCLEOTIDE SEQUENCE [LARGE SCALE MRNA]</scope>
</reference>
<reference key="5">
    <citation type="journal article" date="1996" name="Plant J.">
        <title>Further progress towards a catalogue of all Arabidopsis genes: analysis of a set of 5000 non-redundant ESTs.</title>
        <authorList>
            <person name="Cooke R."/>
            <person name="Raynal M."/>
            <person name="Laudie M."/>
            <person name="Grellet F."/>
            <person name="Delseny M."/>
            <person name="Morris P.-C."/>
            <person name="Guerrier D."/>
            <person name="Giraudat J."/>
            <person name="Quigley F."/>
            <person name="Clabault G."/>
            <person name="Li Y.-F."/>
            <person name="Mache R."/>
            <person name="Krivitzky M."/>
            <person name="Gy I.J.-J."/>
            <person name="Kreis M."/>
            <person name="Lecharny A."/>
            <person name="Parmentier Y."/>
            <person name="Marbach J."/>
            <person name="Fleck J."/>
            <person name="Clement B."/>
            <person name="Philipps G."/>
            <person name="Herve C."/>
            <person name="Bardet C."/>
            <person name="Tremousaygue D."/>
            <person name="Lescure B."/>
            <person name="Lacomme C."/>
            <person name="Roby D."/>
            <person name="Jourjon M.-F."/>
            <person name="Chabrier P."/>
            <person name="Charpenteau J.-L."/>
            <person name="Desprez T."/>
            <person name="Amselem J."/>
            <person name="Chiapello H."/>
            <person name="Hoefte H."/>
        </authorList>
    </citation>
    <scope>NUCLEOTIDE SEQUENCE [LARGE SCALE MRNA] OF 234-320</scope>
    <source>
        <strain>cv. Columbia</strain>
        <tissue>Seedling</tissue>
    </source>
</reference>
<reference key="6">
    <citation type="journal article" date="2006" name="Phytochemistry">
        <title>Phosphoproteins analysis in plants: a proteomic approach.</title>
        <authorList>
            <person name="Laugesen S."/>
            <person name="Messinese E."/>
            <person name="Hem S."/>
            <person name="Pichereaux C."/>
            <person name="Grat S."/>
            <person name="Ranjeva R."/>
            <person name="Rossignol M."/>
            <person name="Bono J.-J."/>
        </authorList>
    </citation>
    <scope>PROTEIN SEQUENCE OF 299-320</scope>
    <scope>PHOSPHORYLATION AT SER-305</scope>
</reference>
<reference key="7">
    <citation type="journal article" date="2001" name="Plant Physiol.">
        <title>The organization of cytoplasmic ribosomal protein genes in the Arabidopsis genome.</title>
        <authorList>
            <person name="Barakat A."/>
            <person name="Szick-Miranda K."/>
            <person name="Chang I.-F."/>
            <person name="Guyot R."/>
            <person name="Blanc G."/>
            <person name="Cooke R."/>
            <person name="Delseny M."/>
            <person name="Bailey-Serres J."/>
        </authorList>
    </citation>
    <scope>GENE FAMILY ORGANIZATION</scope>
    <scope>NOMENCLATURE</scope>
</reference>
<reference key="8">
    <citation type="journal article" date="2008" name="J. Proteome Res.">
        <title>Site-specific phosphorylation profiling of Arabidopsis proteins by mass spectrometry and peptide chip analysis.</title>
        <authorList>
            <person name="de la Fuente van Bentem S."/>
            <person name="Anrather D."/>
            <person name="Dohnal I."/>
            <person name="Roitinger E."/>
            <person name="Csaszar E."/>
            <person name="Joore J."/>
            <person name="Buijnink J."/>
            <person name="Carreri A."/>
            <person name="Forzani C."/>
            <person name="Lorkovic Z.J."/>
            <person name="Barta A."/>
            <person name="Lecourieux D."/>
            <person name="Verhounig A."/>
            <person name="Jonak C."/>
            <person name="Hirt H."/>
        </authorList>
    </citation>
    <scope>PHOSPHORYLATION [LARGE SCALE ANALYSIS] AT SER-305</scope>
    <scope>IDENTIFICATION BY MASS SPECTROMETRY [LARGE SCALE ANALYSIS]</scope>
    <source>
        <tissue>Root</tissue>
    </source>
</reference>
<reference key="9">
    <citation type="journal article" date="2009" name="J. Proteomics">
        <title>Phosphoproteomic analysis of nuclei-enriched fractions from Arabidopsis thaliana.</title>
        <authorList>
            <person name="Jones A.M.E."/>
            <person name="MacLean D."/>
            <person name="Studholme D.J."/>
            <person name="Serna-Sanz A."/>
            <person name="Andreasson E."/>
            <person name="Rathjen J.P."/>
            <person name="Peck S.C."/>
        </authorList>
    </citation>
    <scope>PHOSPHORYLATION [LARGE SCALE ANALYSIS] AT SER-305</scope>
    <scope>IDENTIFICATION BY MASS SPECTROMETRY [LARGE SCALE ANALYSIS]</scope>
    <source>
        <strain>cv. Columbia</strain>
    </source>
</reference>
<reference key="10">
    <citation type="journal article" date="2009" name="Plant Physiol.">
        <title>Large-scale Arabidopsis phosphoproteome profiling reveals novel chloroplast kinase substrates and phosphorylation networks.</title>
        <authorList>
            <person name="Reiland S."/>
            <person name="Messerli G."/>
            <person name="Baerenfaller K."/>
            <person name="Gerrits B."/>
            <person name="Endler A."/>
            <person name="Grossmann J."/>
            <person name="Gruissem W."/>
            <person name="Baginsky S."/>
        </authorList>
    </citation>
    <scope>PHOSPHORYLATION [LARGE SCALE ANALYSIS] AT SER-305</scope>
    <scope>IDENTIFICATION BY MASS SPECTROMETRY [LARGE SCALE ANALYSIS]</scope>
</reference>
<reference key="11">
    <citation type="journal article" date="2023" name="Plant Cell">
        <title>An updated nomenclature for plant ribosomal protein genes.</title>
        <authorList>
            <person name="Scarpin M.R."/>
            <person name="Busche M."/>
            <person name="Martinez R.E."/>
            <person name="Harper L.C."/>
            <person name="Reiser L."/>
            <person name="Szakonyi D."/>
            <person name="Merchante C."/>
            <person name="Lan T."/>
            <person name="Xiong W."/>
            <person name="Mo B."/>
            <person name="Tang G."/>
            <person name="Chen X."/>
            <person name="Bailey-Serres J."/>
            <person name="Browning K.S."/>
            <person name="Brunkard J.O."/>
        </authorList>
    </citation>
    <scope>NOMENCLATURE</scope>
</reference>
<evidence type="ECO:0000250" key="1"/>
<evidence type="ECO:0000250" key="2">
    <source>
        <dbReference type="UniProtKB" id="P57691"/>
    </source>
</evidence>
<evidence type="ECO:0000256" key="3">
    <source>
        <dbReference type="SAM" id="MobiDB-lite"/>
    </source>
</evidence>
<evidence type="ECO:0000269" key="4">
    <source>
    </source>
</evidence>
<evidence type="ECO:0000303" key="5">
    <source>
    </source>
</evidence>
<evidence type="ECO:0000305" key="6"/>
<evidence type="ECO:0007744" key="7">
    <source>
    </source>
</evidence>
<evidence type="ECO:0007744" key="8">
    <source>
    </source>
</evidence>
<evidence type="ECO:0007744" key="9">
    <source>
    </source>
</evidence>
<name>RLA02_ARATH</name>
<organism>
    <name type="scientific">Arabidopsis thaliana</name>
    <name type="common">Mouse-ear cress</name>
    <dbReference type="NCBI Taxonomy" id="3702"/>
    <lineage>
        <taxon>Eukaryota</taxon>
        <taxon>Viridiplantae</taxon>
        <taxon>Streptophyta</taxon>
        <taxon>Embryophyta</taxon>
        <taxon>Tracheophyta</taxon>
        <taxon>Spermatophyta</taxon>
        <taxon>Magnoliopsida</taxon>
        <taxon>eudicotyledons</taxon>
        <taxon>Gunneridae</taxon>
        <taxon>Pentapetalae</taxon>
        <taxon>rosids</taxon>
        <taxon>malvids</taxon>
        <taxon>Brassicales</taxon>
        <taxon>Brassicaceae</taxon>
        <taxon>Camelineae</taxon>
        <taxon>Arabidopsis</taxon>
    </lineage>
</organism>
<keyword id="KW-0025">Alternative splicing</keyword>
<keyword id="KW-0903">Direct protein sequencing</keyword>
<keyword id="KW-0597">Phosphoprotein</keyword>
<keyword id="KW-1185">Reference proteome</keyword>
<keyword id="KW-0687">Ribonucleoprotein</keyword>
<keyword id="KW-0689">Ribosomal protein</keyword>
<comment type="function">
    <text>Ribosomal protein P0 is the functional equivalent of E.coli protein L10.</text>
</comment>
<comment type="subunit">
    <text evidence="1">P0 forms a pentameric complex by interaction with dimers of P1 and P2.</text>
</comment>
<comment type="alternative products">
    <event type="alternative splicing"/>
    <isoform>
        <id>Q42112-1</id>
        <name>1</name>
        <sequence type="displayed"/>
    </isoform>
    <text>A number of isoforms are produced. According to EST sequences.</text>
</comment>
<comment type="similarity">
    <text evidence="6">Belongs to the universal ribosomal protein uL10 family.</text>
</comment>
<feature type="chain" id="PRO_0000154776" description="Large ribosomal subunit protein uL10y">
    <location>
        <begin position="1"/>
        <end position="320"/>
    </location>
</feature>
<feature type="region of interest" description="Disordered" evidence="3">
    <location>
        <begin position="289"/>
        <end position="320"/>
    </location>
</feature>
<feature type="compositionally biased region" description="Acidic residues" evidence="3">
    <location>
        <begin position="302"/>
        <end position="320"/>
    </location>
</feature>
<feature type="modified residue" description="Phosphoserine" evidence="4 7 8 9">
    <location>
        <position position="305"/>
    </location>
</feature>
<feature type="modified residue" description="Phosphotyrosine" evidence="2">
    <location>
        <position position="310"/>
    </location>
</feature>
<feature type="sequence conflict" description="In Ref. 4; AAM63644." evidence="6" ref="4">
    <original>R</original>
    <variation>L</variation>
    <location>
        <position position="48"/>
    </location>
</feature>
<proteinExistence type="evidence at protein level"/>
<accession>Q42112</accession>
<accession>Q8LCI7</accession>
<accession>Q9SR42</accession>
<accession>Q9SS70</accession>
<gene>
    <name type="primary">RPP0B</name>
    <name type="ordered locus">At3g09200</name>
    <name type="ORF">F3L24.7</name>
    <name type="ORF">MZB10.24</name>
</gene>